<accession>B5BD83</accession>
<name>CLPP_SALPK</name>
<comment type="function">
    <text evidence="1">Cleaves peptides in various proteins in a process that requires ATP hydrolysis. Has a chymotrypsin-like activity. Plays a major role in the degradation of misfolded proteins.</text>
</comment>
<comment type="catalytic activity">
    <reaction evidence="1">
        <text>Hydrolysis of proteins to small peptides in the presence of ATP and magnesium. alpha-casein is the usual test substrate. In the absence of ATP, only oligopeptides shorter than five residues are hydrolyzed (such as succinyl-Leu-Tyr-|-NHMec, and Leu-Tyr-Leu-|-Tyr-Trp, in which cleavage of the -Tyr-|-Leu- and -Tyr-|-Trp bonds also occurs).</text>
        <dbReference type="EC" id="3.4.21.92"/>
    </reaction>
</comment>
<comment type="subunit">
    <text evidence="1">Fourteen ClpP subunits assemble into 2 heptameric rings which stack back to back to give a disk-like structure with a central cavity, resembling the structure of eukaryotic proteasomes. Component of the ClpAP and ClpXP complexes.</text>
</comment>
<comment type="subcellular location">
    <subcellularLocation>
        <location evidence="1">Cytoplasm</location>
    </subcellularLocation>
</comment>
<comment type="similarity">
    <text evidence="1">Belongs to the peptidase S14 family.</text>
</comment>
<dbReference type="EC" id="3.4.21.92" evidence="1"/>
<dbReference type="EMBL" id="FM200053">
    <property type="protein sequence ID" value="CAR60326.1"/>
    <property type="molecule type" value="Genomic_DNA"/>
</dbReference>
<dbReference type="RefSeq" id="WP_000122256.1">
    <property type="nucleotide sequence ID" value="NC_011147.1"/>
</dbReference>
<dbReference type="SMR" id="B5BD83"/>
<dbReference type="MEROPS" id="S14.001"/>
<dbReference type="KEGG" id="sek:SSPA2116"/>
<dbReference type="HOGENOM" id="CLU_058707_3_2_6"/>
<dbReference type="Proteomes" id="UP000001869">
    <property type="component" value="Chromosome"/>
</dbReference>
<dbReference type="GO" id="GO:0005737">
    <property type="term" value="C:cytoplasm"/>
    <property type="evidence" value="ECO:0007669"/>
    <property type="project" value="UniProtKB-SubCell"/>
</dbReference>
<dbReference type="GO" id="GO:0009368">
    <property type="term" value="C:endopeptidase Clp complex"/>
    <property type="evidence" value="ECO:0007669"/>
    <property type="project" value="TreeGrafter"/>
</dbReference>
<dbReference type="GO" id="GO:0004176">
    <property type="term" value="F:ATP-dependent peptidase activity"/>
    <property type="evidence" value="ECO:0007669"/>
    <property type="project" value="InterPro"/>
</dbReference>
<dbReference type="GO" id="GO:0051117">
    <property type="term" value="F:ATPase binding"/>
    <property type="evidence" value="ECO:0007669"/>
    <property type="project" value="TreeGrafter"/>
</dbReference>
<dbReference type="GO" id="GO:0004252">
    <property type="term" value="F:serine-type endopeptidase activity"/>
    <property type="evidence" value="ECO:0007669"/>
    <property type="project" value="UniProtKB-UniRule"/>
</dbReference>
<dbReference type="GO" id="GO:0006515">
    <property type="term" value="P:protein quality control for misfolded or incompletely synthesized proteins"/>
    <property type="evidence" value="ECO:0007669"/>
    <property type="project" value="TreeGrafter"/>
</dbReference>
<dbReference type="CDD" id="cd07017">
    <property type="entry name" value="S14_ClpP_2"/>
    <property type="match status" value="1"/>
</dbReference>
<dbReference type="FunFam" id="3.90.226.10:FF:000001">
    <property type="entry name" value="ATP-dependent Clp protease proteolytic subunit"/>
    <property type="match status" value="1"/>
</dbReference>
<dbReference type="Gene3D" id="3.90.226.10">
    <property type="entry name" value="2-enoyl-CoA Hydratase, Chain A, domain 1"/>
    <property type="match status" value="1"/>
</dbReference>
<dbReference type="HAMAP" id="MF_00444">
    <property type="entry name" value="ClpP"/>
    <property type="match status" value="1"/>
</dbReference>
<dbReference type="InterPro" id="IPR001907">
    <property type="entry name" value="ClpP"/>
</dbReference>
<dbReference type="InterPro" id="IPR029045">
    <property type="entry name" value="ClpP/crotonase-like_dom_sf"/>
</dbReference>
<dbReference type="InterPro" id="IPR023562">
    <property type="entry name" value="ClpP/TepA"/>
</dbReference>
<dbReference type="InterPro" id="IPR033135">
    <property type="entry name" value="ClpP_His_AS"/>
</dbReference>
<dbReference type="InterPro" id="IPR018215">
    <property type="entry name" value="ClpP_Ser_AS"/>
</dbReference>
<dbReference type="NCBIfam" id="TIGR00493">
    <property type="entry name" value="clpP"/>
    <property type="match status" value="1"/>
</dbReference>
<dbReference type="NCBIfam" id="NF001368">
    <property type="entry name" value="PRK00277.1"/>
    <property type="match status" value="1"/>
</dbReference>
<dbReference type="NCBIfam" id="NF009205">
    <property type="entry name" value="PRK12553.1"/>
    <property type="match status" value="1"/>
</dbReference>
<dbReference type="PANTHER" id="PTHR10381">
    <property type="entry name" value="ATP-DEPENDENT CLP PROTEASE PROTEOLYTIC SUBUNIT"/>
    <property type="match status" value="1"/>
</dbReference>
<dbReference type="PANTHER" id="PTHR10381:SF70">
    <property type="entry name" value="ATP-DEPENDENT CLP PROTEASE PROTEOLYTIC SUBUNIT"/>
    <property type="match status" value="1"/>
</dbReference>
<dbReference type="Pfam" id="PF00574">
    <property type="entry name" value="CLP_protease"/>
    <property type="match status" value="1"/>
</dbReference>
<dbReference type="PRINTS" id="PR00127">
    <property type="entry name" value="CLPPROTEASEP"/>
</dbReference>
<dbReference type="SUPFAM" id="SSF52096">
    <property type="entry name" value="ClpP/crotonase"/>
    <property type="match status" value="1"/>
</dbReference>
<dbReference type="PROSITE" id="PS00382">
    <property type="entry name" value="CLP_PROTEASE_HIS"/>
    <property type="match status" value="1"/>
</dbReference>
<dbReference type="PROSITE" id="PS00381">
    <property type="entry name" value="CLP_PROTEASE_SER"/>
    <property type="match status" value="1"/>
</dbReference>
<gene>
    <name evidence="1" type="primary">clpP</name>
    <name type="ordered locus">SSPA2116</name>
</gene>
<protein>
    <recommendedName>
        <fullName evidence="1">ATP-dependent Clp protease proteolytic subunit</fullName>
        <ecNumber evidence="1">3.4.21.92</ecNumber>
    </recommendedName>
    <alternativeName>
        <fullName evidence="1">Endopeptidase Clp</fullName>
    </alternativeName>
</protein>
<organism>
    <name type="scientific">Salmonella paratyphi A (strain AKU_12601)</name>
    <dbReference type="NCBI Taxonomy" id="554290"/>
    <lineage>
        <taxon>Bacteria</taxon>
        <taxon>Pseudomonadati</taxon>
        <taxon>Pseudomonadota</taxon>
        <taxon>Gammaproteobacteria</taxon>
        <taxon>Enterobacterales</taxon>
        <taxon>Enterobacteriaceae</taxon>
        <taxon>Salmonella</taxon>
    </lineage>
</organism>
<evidence type="ECO:0000255" key="1">
    <source>
        <dbReference type="HAMAP-Rule" id="MF_00444"/>
    </source>
</evidence>
<sequence>MSYSGERDNLAPHMALVPMVIEQTSRGERSFDIYSRLLKERVIFLTGQVEDHMANLIVAQMLFLEAENPEKDIYLYINSPGGVITAGISIYDTMQFIKPDVSTICMGQAASMGAFLLTAGAKGKRFCLPNSRVMIHQPLGGYQGQATDIEIHAREILKVKGRMNELMAHHTGQSLEQIERDTERDRFLSAPEAVEYGLVDSILTHRN</sequence>
<proteinExistence type="inferred from homology"/>
<feature type="chain" id="PRO_1000189665" description="ATP-dependent Clp protease proteolytic subunit">
    <location>
        <begin position="1"/>
        <end position="207"/>
    </location>
</feature>
<feature type="active site" description="Nucleophile" evidence="1">
    <location>
        <position position="111"/>
    </location>
</feature>
<feature type="active site" evidence="1">
    <location>
        <position position="136"/>
    </location>
</feature>
<keyword id="KW-0963">Cytoplasm</keyword>
<keyword id="KW-0378">Hydrolase</keyword>
<keyword id="KW-0645">Protease</keyword>
<keyword id="KW-0720">Serine protease</keyword>
<reference key="1">
    <citation type="journal article" date="2009" name="BMC Genomics">
        <title>Pseudogene accumulation in the evolutionary histories of Salmonella enterica serovars Paratyphi A and Typhi.</title>
        <authorList>
            <person name="Holt K.E."/>
            <person name="Thomson N.R."/>
            <person name="Wain J."/>
            <person name="Langridge G.C."/>
            <person name="Hasan R."/>
            <person name="Bhutta Z.A."/>
            <person name="Quail M.A."/>
            <person name="Norbertczak H."/>
            <person name="Walker D."/>
            <person name="Simmonds M."/>
            <person name="White B."/>
            <person name="Bason N."/>
            <person name="Mungall K."/>
            <person name="Dougan G."/>
            <person name="Parkhill J."/>
        </authorList>
    </citation>
    <scope>NUCLEOTIDE SEQUENCE [LARGE SCALE GENOMIC DNA]</scope>
    <source>
        <strain>AKU_12601</strain>
    </source>
</reference>